<organism>
    <name type="scientific">Shigella flexneri</name>
    <dbReference type="NCBI Taxonomy" id="623"/>
    <lineage>
        <taxon>Bacteria</taxon>
        <taxon>Pseudomonadati</taxon>
        <taxon>Pseudomonadota</taxon>
        <taxon>Gammaproteobacteria</taxon>
        <taxon>Enterobacterales</taxon>
        <taxon>Enterobacteriaceae</taxon>
        <taxon>Shigella</taxon>
    </lineage>
</organism>
<dbReference type="EC" id="7.4.2.9" evidence="1"/>
<dbReference type="EMBL" id="AE005674">
    <property type="protein sequence ID" value="AAN45027.1"/>
    <property type="molecule type" value="Genomic_DNA"/>
</dbReference>
<dbReference type="EMBL" id="AE014073">
    <property type="protein sequence ID" value="AAP19161.1"/>
    <property type="molecule type" value="Genomic_DNA"/>
</dbReference>
<dbReference type="RefSeq" id="NP_709320.1">
    <property type="nucleotide sequence ID" value="NC_004337.2"/>
</dbReference>
<dbReference type="RefSeq" id="WP_001196486.1">
    <property type="nucleotide sequence ID" value="NZ_WPGW01000020.1"/>
</dbReference>
<dbReference type="SMR" id="P0AAG2"/>
<dbReference type="STRING" id="198214.SF3576"/>
<dbReference type="PaxDb" id="198214-SF3576"/>
<dbReference type="DNASU" id="1080400"/>
<dbReference type="GeneID" id="1026341"/>
<dbReference type="GeneID" id="75201990"/>
<dbReference type="KEGG" id="sfl:SF3576"/>
<dbReference type="KEGG" id="sfx:S4194"/>
<dbReference type="PATRIC" id="fig|198214.7.peg.4219"/>
<dbReference type="HOGENOM" id="CLU_000604_1_23_6"/>
<dbReference type="Proteomes" id="UP000001006">
    <property type="component" value="Chromosome"/>
</dbReference>
<dbReference type="Proteomes" id="UP000002673">
    <property type="component" value="Chromosome"/>
</dbReference>
<dbReference type="GO" id="GO:0005886">
    <property type="term" value="C:plasma membrane"/>
    <property type="evidence" value="ECO:0007669"/>
    <property type="project" value="UniProtKB-SubCell"/>
</dbReference>
<dbReference type="GO" id="GO:0005524">
    <property type="term" value="F:ATP binding"/>
    <property type="evidence" value="ECO:0007669"/>
    <property type="project" value="UniProtKB-KW"/>
</dbReference>
<dbReference type="GO" id="GO:0016887">
    <property type="term" value="F:ATP hydrolysis activity"/>
    <property type="evidence" value="ECO:0007669"/>
    <property type="project" value="InterPro"/>
</dbReference>
<dbReference type="GO" id="GO:0015833">
    <property type="term" value="P:peptide transport"/>
    <property type="evidence" value="ECO:0007669"/>
    <property type="project" value="UniProtKB-KW"/>
</dbReference>
<dbReference type="GO" id="GO:0015031">
    <property type="term" value="P:protein transport"/>
    <property type="evidence" value="ECO:0007669"/>
    <property type="project" value="UniProtKB-KW"/>
</dbReference>
<dbReference type="CDD" id="cd03257">
    <property type="entry name" value="ABC_NikE_OppD_transporters"/>
    <property type="match status" value="1"/>
</dbReference>
<dbReference type="FunFam" id="3.40.50.300:FF:000016">
    <property type="entry name" value="Oligopeptide ABC transporter ATP-binding component"/>
    <property type="match status" value="1"/>
</dbReference>
<dbReference type="Gene3D" id="3.40.50.300">
    <property type="entry name" value="P-loop containing nucleotide triphosphate hydrolases"/>
    <property type="match status" value="1"/>
</dbReference>
<dbReference type="InterPro" id="IPR003593">
    <property type="entry name" value="AAA+_ATPase"/>
</dbReference>
<dbReference type="InterPro" id="IPR050388">
    <property type="entry name" value="ABC_Ni/Peptide_Import"/>
</dbReference>
<dbReference type="InterPro" id="IPR003439">
    <property type="entry name" value="ABC_transporter-like_ATP-bd"/>
</dbReference>
<dbReference type="InterPro" id="IPR017871">
    <property type="entry name" value="ABC_transporter-like_CS"/>
</dbReference>
<dbReference type="InterPro" id="IPR013563">
    <property type="entry name" value="Oligopep_ABC_C"/>
</dbReference>
<dbReference type="InterPro" id="IPR027417">
    <property type="entry name" value="P-loop_NTPase"/>
</dbReference>
<dbReference type="NCBIfam" id="TIGR01727">
    <property type="entry name" value="oligo_HPY"/>
    <property type="match status" value="1"/>
</dbReference>
<dbReference type="NCBIfam" id="NF008246">
    <property type="entry name" value="PRK11022.1"/>
    <property type="match status" value="1"/>
</dbReference>
<dbReference type="PANTHER" id="PTHR43297:SF2">
    <property type="entry name" value="DIPEPTIDE TRANSPORT ATP-BINDING PROTEIN DPPD"/>
    <property type="match status" value="1"/>
</dbReference>
<dbReference type="PANTHER" id="PTHR43297">
    <property type="entry name" value="OLIGOPEPTIDE TRANSPORT ATP-BINDING PROTEIN APPD"/>
    <property type="match status" value="1"/>
</dbReference>
<dbReference type="Pfam" id="PF00005">
    <property type="entry name" value="ABC_tran"/>
    <property type="match status" value="1"/>
</dbReference>
<dbReference type="Pfam" id="PF08352">
    <property type="entry name" value="oligo_HPY"/>
    <property type="match status" value="1"/>
</dbReference>
<dbReference type="SMART" id="SM00382">
    <property type="entry name" value="AAA"/>
    <property type="match status" value="1"/>
</dbReference>
<dbReference type="SUPFAM" id="SSF52540">
    <property type="entry name" value="P-loop containing nucleoside triphosphate hydrolases"/>
    <property type="match status" value="1"/>
</dbReference>
<dbReference type="PROSITE" id="PS00211">
    <property type="entry name" value="ABC_TRANSPORTER_1"/>
    <property type="match status" value="1"/>
</dbReference>
<dbReference type="PROSITE" id="PS50893">
    <property type="entry name" value="ABC_TRANSPORTER_2"/>
    <property type="match status" value="1"/>
</dbReference>
<keyword id="KW-0067">ATP-binding</keyword>
<keyword id="KW-0997">Cell inner membrane</keyword>
<keyword id="KW-1003">Cell membrane</keyword>
<keyword id="KW-0472">Membrane</keyword>
<keyword id="KW-0547">Nucleotide-binding</keyword>
<keyword id="KW-0571">Peptide transport</keyword>
<keyword id="KW-0653">Protein transport</keyword>
<keyword id="KW-1185">Reference proteome</keyword>
<keyword id="KW-1278">Translocase</keyword>
<keyword id="KW-0813">Transport</keyword>
<protein>
    <recommendedName>
        <fullName evidence="1">Dipeptide transport ATP-binding protein DppD</fullName>
        <ecNumber evidence="1">7.4.2.9</ecNumber>
    </recommendedName>
</protein>
<accession>P0AAG2</accession>
<accession>P37314</accession>
<reference key="1">
    <citation type="journal article" date="2002" name="Nucleic Acids Res.">
        <title>Genome sequence of Shigella flexneri 2a: insights into pathogenicity through comparison with genomes of Escherichia coli K12 and O157.</title>
        <authorList>
            <person name="Jin Q."/>
            <person name="Yuan Z."/>
            <person name="Xu J."/>
            <person name="Wang Y."/>
            <person name="Shen Y."/>
            <person name="Lu W."/>
            <person name="Wang J."/>
            <person name="Liu H."/>
            <person name="Yang J."/>
            <person name="Yang F."/>
            <person name="Zhang X."/>
            <person name="Zhang J."/>
            <person name="Yang G."/>
            <person name="Wu H."/>
            <person name="Qu D."/>
            <person name="Dong J."/>
            <person name="Sun L."/>
            <person name="Xue Y."/>
            <person name="Zhao A."/>
            <person name="Gao Y."/>
            <person name="Zhu J."/>
            <person name="Kan B."/>
            <person name="Ding K."/>
            <person name="Chen S."/>
            <person name="Cheng H."/>
            <person name="Yao Z."/>
            <person name="He B."/>
            <person name="Chen R."/>
            <person name="Ma D."/>
            <person name="Qiang B."/>
            <person name="Wen Y."/>
            <person name="Hou Y."/>
            <person name="Yu J."/>
        </authorList>
    </citation>
    <scope>NUCLEOTIDE SEQUENCE [LARGE SCALE GENOMIC DNA]</scope>
    <source>
        <strain>301 / Serotype 2a</strain>
    </source>
</reference>
<reference key="2">
    <citation type="journal article" date="2003" name="Infect. Immun.">
        <title>Complete genome sequence and comparative genomics of Shigella flexneri serotype 2a strain 2457T.</title>
        <authorList>
            <person name="Wei J."/>
            <person name="Goldberg M.B."/>
            <person name="Burland V."/>
            <person name="Venkatesan M.M."/>
            <person name="Deng W."/>
            <person name="Fournier G."/>
            <person name="Mayhew G.F."/>
            <person name="Plunkett G. III"/>
            <person name="Rose D.J."/>
            <person name="Darling A."/>
            <person name="Mau B."/>
            <person name="Perna N.T."/>
            <person name="Payne S.M."/>
            <person name="Runyen-Janecky L.J."/>
            <person name="Zhou S."/>
            <person name="Schwartz D.C."/>
            <person name="Blattner F.R."/>
        </authorList>
    </citation>
    <scope>NUCLEOTIDE SEQUENCE [LARGE SCALE GENOMIC DNA]</scope>
    <source>
        <strain>ATCC 700930 / 2457T / Serotype 2a</strain>
    </source>
</reference>
<gene>
    <name type="primary">dppD</name>
    <name type="ordered locus">SF3576</name>
    <name type="ordered locus">S4194</name>
</gene>
<sequence length="327" mass="35844">MALLNVDKLSVHFGDESAPFRAVDRISYSVKQGEVVGIVGESGSGKSVSSLAIMGLIDYPGRVMAEKLEFNGQDLQRISEKERRNLVGAEVAMIFQDPMTSLNPCYTVGFQIMEAIKVHQGGNKSTRRQRAIDLLNQVGIPDPASRLDVYPHQLSGGMSQRVMIAMAIACRPKLLIADEPTTALDVTIQAQIIELLLELQQKENMALVLITHDLALVAEAAHKIIVMYAGQVVETGDAHAIFHAPRHPYTQALLRALPEFAQDKERLASLPGVVPGKYDRPNGCLLNPRCPYATDRCRAEEPALNMLADGRQSKCHYPLDDAGRPTL</sequence>
<name>DPPD_SHIFL</name>
<feature type="chain" id="PRO_0000092316" description="Dipeptide transport ATP-binding protein DppD">
    <location>
        <begin position="1"/>
        <end position="327"/>
    </location>
</feature>
<feature type="domain" description="ABC transporter" evidence="2">
    <location>
        <begin position="4"/>
        <end position="254"/>
    </location>
</feature>
<feature type="binding site" evidence="2">
    <location>
        <begin position="40"/>
        <end position="47"/>
    </location>
    <ligand>
        <name>ATP</name>
        <dbReference type="ChEBI" id="CHEBI:30616"/>
    </ligand>
</feature>
<evidence type="ECO:0000250" key="1">
    <source>
        <dbReference type="UniProtKB" id="P0AAG0"/>
    </source>
</evidence>
<evidence type="ECO:0000255" key="2">
    <source>
        <dbReference type="PROSITE-ProRule" id="PRU00434"/>
    </source>
</evidence>
<evidence type="ECO:0000305" key="3"/>
<proteinExistence type="inferred from homology"/>
<comment type="function">
    <text evidence="1">Part of the ABC transporter DppABCDF involved in dipeptide transport. Responsible for energy coupling to the transport system.</text>
</comment>
<comment type="catalytic activity">
    <reaction evidence="1">
        <text>a dipeptide(out) + ATP + H2O = a dipeptide(in) + ADP + phosphate + H(+)</text>
        <dbReference type="Rhea" id="RHEA:23120"/>
        <dbReference type="ChEBI" id="CHEBI:15377"/>
        <dbReference type="ChEBI" id="CHEBI:15378"/>
        <dbReference type="ChEBI" id="CHEBI:30616"/>
        <dbReference type="ChEBI" id="CHEBI:43474"/>
        <dbReference type="ChEBI" id="CHEBI:90799"/>
        <dbReference type="ChEBI" id="CHEBI:456216"/>
        <dbReference type="EC" id="7.4.2.9"/>
    </reaction>
</comment>
<comment type="subunit">
    <text evidence="1">The complex is composed of two ATP-binding proteins (DppD and DppF), two transmembrane proteins (DppB and DppC) and a solute-binding protein (DppA).</text>
</comment>
<comment type="subcellular location">
    <subcellularLocation>
        <location evidence="3">Cell inner membrane</location>
        <topology evidence="3">Peripheral membrane protein</topology>
    </subcellularLocation>
</comment>
<comment type="similarity">
    <text evidence="3">Belongs to the ABC transporter superfamily.</text>
</comment>